<evidence type="ECO:0000250" key="1">
    <source>
        <dbReference type="UniProtKB" id="O43914"/>
    </source>
</evidence>
<evidence type="ECO:0000250" key="2">
    <source>
        <dbReference type="UniProtKB" id="O54885"/>
    </source>
</evidence>
<evidence type="ECO:0000255" key="3"/>
<evidence type="ECO:0000256" key="4">
    <source>
        <dbReference type="SAM" id="MobiDB-lite"/>
    </source>
</evidence>
<evidence type="ECO:0000305" key="5"/>
<name>TYOBP_PANTR</name>
<feature type="signal peptide" evidence="3">
    <location>
        <begin position="1"/>
        <end position="27"/>
    </location>
</feature>
<feature type="chain" id="PRO_0000285675" description="TYRO protein tyrosine kinase-binding protein">
    <location>
        <begin position="28"/>
        <end position="113"/>
    </location>
</feature>
<feature type="topological domain" description="Extracellular" evidence="1">
    <location>
        <begin position="28"/>
        <end position="40"/>
    </location>
</feature>
<feature type="transmembrane region" description="Helical" evidence="1">
    <location>
        <begin position="41"/>
        <end position="61"/>
    </location>
</feature>
<feature type="topological domain" description="Cytoplasmic" evidence="1">
    <location>
        <begin position="62"/>
        <end position="113"/>
    </location>
</feature>
<feature type="domain" description="ITAM">
    <location>
        <begin position="80"/>
        <end position="108"/>
    </location>
</feature>
<feature type="region of interest" description="Disordered" evidence="4">
    <location>
        <begin position="75"/>
        <end position="113"/>
    </location>
</feature>
<feature type="compositionally biased region" description="Polar residues" evidence="4">
    <location>
        <begin position="87"/>
        <end position="100"/>
    </location>
</feature>
<feature type="binding site" evidence="1">
    <location>
        <position position="50"/>
    </location>
    <ligand>
        <name>Ca(2+)</name>
        <dbReference type="ChEBI" id="CHEBI:29108"/>
        <note>ligand shared between two neighboring subunits in homooligomer</note>
    </ligand>
</feature>
<feature type="site" description="Important for interaction with transmembrane receptors" evidence="1">
    <location>
        <position position="54"/>
    </location>
</feature>
<feature type="modified residue" description="Phosphotyrosine" evidence="2">
    <location>
        <position position="91"/>
    </location>
</feature>
<feature type="modified residue" description="Phosphotyrosine" evidence="2">
    <location>
        <position position="102"/>
    </location>
</feature>
<feature type="disulfide bond" description="Interchain" evidence="1">
    <location>
        <position position="35"/>
    </location>
</feature>
<accession>A4F4L0</accession>
<gene>
    <name evidence="1" type="primary">TYROBP</name>
    <name evidence="1" type="synonym">DAP12</name>
</gene>
<organism>
    <name type="scientific">Pan troglodytes</name>
    <name type="common">Chimpanzee</name>
    <dbReference type="NCBI Taxonomy" id="9598"/>
    <lineage>
        <taxon>Eukaryota</taxon>
        <taxon>Metazoa</taxon>
        <taxon>Chordata</taxon>
        <taxon>Craniata</taxon>
        <taxon>Vertebrata</taxon>
        <taxon>Euteleostomi</taxon>
        <taxon>Mammalia</taxon>
        <taxon>Eutheria</taxon>
        <taxon>Euarchontoglires</taxon>
        <taxon>Primates</taxon>
        <taxon>Haplorrhini</taxon>
        <taxon>Catarrhini</taxon>
        <taxon>Hominidae</taxon>
        <taxon>Pan</taxon>
    </lineage>
</organism>
<sequence length="113" mass="12219">MGGLEPCSRLLLLPLLLAVGGLRPVQAQAQSDCSCSTVSPGVLAGIVMGDLVLTVLIALAVYFLGRLVHRGRGAAEAATRKQRITETESPYQELQGQRSDVYSDLNMQRPYYK</sequence>
<keyword id="KW-0106">Calcium</keyword>
<keyword id="KW-1003">Cell membrane</keyword>
<keyword id="KW-1015">Disulfide bond</keyword>
<keyword id="KW-0391">Immunity</keyword>
<keyword id="KW-0472">Membrane</keyword>
<keyword id="KW-0479">Metal-binding</keyword>
<keyword id="KW-0597">Phosphoprotein</keyword>
<keyword id="KW-1185">Reference proteome</keyword>
<keyword id="KW-0732">Signal</keyword>
<keyword id="KW-0812">Transmembrane</keyword>
<keyword id="KW-1133">Transmembrane helix</keyword>
<proteinExistence type="inferred from homology"/>
<comment type="function">
    <text evidence="1 2">Adapter protein which non-covalently associates with activating receptors found on the surface of a variety of immune cells to mediate signaling and cell activation following ligand binding by the receptors (By similarity). TYROBP is tyrosine-phosphorylated in the ITAM domain following ligand binding by the associated receptors which leads to activation of additional tyrosine kinases and subsequent cell activation (By similarity). Also has an inhibitory role in some cells (By similarity). Non-covalently associates with activating receptors of the CD300 family to mediate cell activation (By similarity). Also mediates cell activation through association with activating receptors of the CD200R family (By similarity). Required for neutrophil activation mediated by integrin (By similarity). Required for the activation of myeloid cells mediated by the CLEC5A/MDL1 receptor (By similarity). Associates with natural killer (NK) cell receptors such as the KLRD1/KLRC2 heterodimer to mediate NK cell activation (By similarity). Associates with TREM1 to mediate activation of neutrophils and monocytes (By similarity). Associates with TREM2 on monocyte-derived dendritic cells to mediate up-regulation of chemokine receptor CCR7 and dendritic cell maturation and survival (By similarity). Association with TREM2 mediates cytokine-induced formation of multinucleated giant cells which are formed by the fusion of macrophages (By similarity). Stabilizes the TREM2 C-terminal fragment (TREM2-CTF) produced by TREM2 ectodomain shedding which suppresses the release of pro-inflammatory cytokines (By similarity). In microglia, required with TREM2 for phagocytosis of apoptotic neurons (By similarity). Required with ITGAM/CD11B in microglia to control production of microglial superoxide ions which promote the neuronal apoptosis that occurs during brain development (By similarity). Promotes pro-inflammatory responses in microglia following nerve injury which accelerates degeneration of injured neurons (By similarity). Positively regulates the expression of the IRAK3/IRAK-M kinase and IL10 production by liver dendritic cells and inhibits their T cell allosimulatory ability (By similarity). Negatively regulates B cell proliferation (By similarity). Required for CSF1-mediated osteoclast cytoskeletal organization (By similarity). Positively regulates multinucleation during osteoclast development (By similarity).</text>
</comment>
<comment type="subunit">
    <text evidence="1 2">Homodimer; disulfide-linked (By similarity). Homotrimer; disulfide-linked (By similarity). Homotetramer; disulfide-linked (By similarity). Homotrimers and homotetramers form when low levels of partner receptors are available and is competitive with assembly with interacting receptors (By similarity). They may represent alternative oligomerization states or may be intermediates in the receptor assembly process (By similarity). Binding of a metal cation aids in homooligomerization through coordination of the metal ion by the subunits of the oligomer (By similarity). Interacts with TREM1 (By similarity). Interacts with TREM2 (By similarity). Interacts with CLECSF5 (By similarity). Interacts with CD300LB and CD300C2 (By similarity). Interacts with CD300E (By similarity). Interacts (via ITAM domain) with SYK (via SH2 domains); activates SYK mediating neutrophils and macrophages integrin-mediated activation (By similarity). Interacts with KLRC2 (By similarity). Interacts with CD300H (By similarity). Interacts with KLRD1 (By similarity). Interacts with SIGLEC1 (By similarity).</text>
</comment>
<comment type="subcellular location">
    <subcellularLocation>
        <location evidence="1">Cell membrane</location>
        <topology evidence="3">Single-pass type I membrane protein</topology>
    </subcellularLocation>
</comment>
<comment type="PTM">
    <text evidence="1">Following ligand binding by associated receptors, tyrosine phosphorylated in the ITAM domain which leads to activation of additional tyrosine kinases and subsequent cell activation.</text>
</comment>
<comment type="similarity">
    <text evidence="5">Belongs to the TYROBP family.</text>
</comment>
<protein>
    <recommendedName>
        <fullName evidence="1">TYRO protein tyrosine kinase-binding protein</fullName>
    </recommendedName>
    <alternativeName>
        <fullName evidence="1">DNAX-activation protein 12</fullName>
    </alternativeName>
</protein>
<dbReference type="EMBL" id="AM236233">
    <property type="protein sequence ID" value="CAJ85606.1"/>
    <property type="molecule type" value="mRNA"/>
</dbReference>
<dbReference type="RefSeq" id="NP_001077092.1">
    <property type="nucleotide sequence ID" value="NM_001083623.1"/>
</dbReference>
<dbReference type="SMR" id="A4F4L0"/>
<dbReference type="FunCoup" id="A4F4L0">
    <property type="interactions" value="280"/>
</dbReference>
<dbReference type="STRING" id="9598.ENSPTRP00000018632"/>
<dbReference type="PaxDb" id="9598-ENSPTRP00000018632"/>
<dbReference type="GeneID" id="455968"/>
<dbReference type="KEGG" id="ptr:455968"/>
<dbReference type="CTD" id="7305"/>
<dbReference type="eggNOG" id="ENOG502SCVI">
    <property type="taxonomic scope" value="Eukaryota"/>
</dbReference>
<dbReference type="HOGENOM" id="CLU_141718_0_0_1"/>
<dbReference type="InParanoid" id="A4F4L0"/>
<dbReference type="TreeFam" id="TF336898"/>
<dbReference type="Proteomes" id="UP000002277">
    <property type="component" value="Unplaced"/>
</dbReference>
<dbReference type="GO" id="GO:0009986">
    <property type="term" value="C:cell surface"/>
    <property type="evidence" value="ECO:0000250"/>
    <property type="project" value="UniProtKB"/>
</dbReference>
<dbReference type="GO" id="GO:0005886">
    <property type="term" value="C:plasma membrane"/>
    <property type="evidence" value="ECO:0000250"/>
    <property type="project" value="UniProtKB"/>
</dbReference>
<dbReference type="GO" id="GO:0046872">
    <property type="term" value="F:metal ion binding"/>
    <property type="evidence" value="ECO:0007669"/>
    <property type="project" value="UniProtKB-KW"/>
</dbReference>
<dbReference type="GO" id="GO:0042803">
    <property type="term" value="F:protein homodimerization activity"/>
    <property type="evidence" value="ECO:0000250"/>
    <property type="project" value="UniProtKB"/>
</dbReference>
<dbReference type="GO" id="GO:0005102">
    <property type="term" value="F:signaling receptor binding"/>
    <property type="evidence" value="ECO:0000318"/>
    <property type="project" value="GO_Central"/>
</dbReference>
<dbReference type="GO" id="GO:0043277">
    <property type="term" value="P:apoptotic cell clearance"/>
    <property type="evidence" value="ECO:0000250"/>
    <property type="project" value="UniProtKB"/>
</dbReference>
<dbReference type="GO" id="GO:0002282">
    <property type="term" value="P:microglial cell activation involved in immune response"/>
    <property type="evidence" value="ECO:0000318"/>
    <property type="project" value="GO_Central"/>
</dbReference>
<dbReference type="GO" id="GO:0030889">
    <property type="term" value="P:negative regulation of B cell proliferation"/>
    <property type="evidence" value="ECO:0000318"/>
    <property type="project" value="GO_Central"/>
</dbReference>
<dbReference type="GO" id="GO:0032911">
    <property type="term" value="P:negative regulation of transforming growth factor beta1 production"/>
    <property type="evidence" value="ECO:0000318"/>
    <property type="project" value="GO_Central"/>
</dbReference>
<dbReference type="GO" id="GO:0002283">
    <property type="term" value="P:neutrophil activation involved in immune response"/>
    <property type="evidence" value="ECO:0000318"/>
    <property type="project" value="GO_Central"/>
</dbReference>
<dbReference type="GO" id="GO:0034241">
    <property type="term" value="P:positive regulation of macrophage fusion"/>
    <property type="evidence" value="ECO:0000318"/>
    <property type="project" value="GO_Central"/>
</dbReference>
<dbReference type="GO" id="GO:1904151">
    <property type="term" value="P:positive regulation of microglial cell mediated cytotoxicity"/>
    <property type="evidence" value="ECO:0000318"/>
    <property type="project" value="GO_Central"/>
</dbReference>
<dbReference type="GO" id="GO:0032816">
    <property type="term" value="P:positive regulation of natural killer cell activation"/>
    <property type="evidence" value="ECO:0000318"/>
    <property type="project" value="GO_Central"/>
</dbReference>
<dbReference type="GO" id="GO:0071526">
    <property type="term" value="P:semaphorin-plexin signaling pathway"/>
    <property type="evidence" value="ECO:0000250"/>
    <property type="project" value="UniProtKB"/>
</dbReference>
<dbReference type="GO" id="GO:0002223">
    <property type="term" value="P:stimulatory C-type lectin receptor signaling pathway"/>
    <property type="evidence" value="ECO:0000250"/>
    <property type="project" value="UniProtKB"/>
</dbReference>
<dbReference type="GO" id="GO:0002222">
    <property type="term" value="P:stimulatory killer cell immunoglobulin-like receptor signaling pathway"/>
    <property type="evidence" value="ECO:0000250"/>
    <property type="project" value="UniProtKB"/>
</dbReference>
<dbReference type="GO" id="GO:0002291">
    <property type="term" value="P:T cell activation via T cell receptor contact with antigen bound to MHC molecule on antigen presenting cell"/>
    <property type="evidence" value="ECO:0000250"/>
    <property type="project" value="UniProtKB"/>
</dbReference>
<dbReference type="FunFam" id="1.10.287.770:FF:000004">
    <property type="entry name" value="TYRO protein tyrosine kinase-binding protein"/>
    <property type="match status" value="1"/>
</dbReference>
<dbReference type="Gene3D" id="1.10.287.770">
    <property type="entry name" value="YojJ-like"/>
    <property type="match status" value="1"/>
</dbReference>
<dbReference type="InterPro" id="IPR026200">
    <property type="entry name" value="Tyrobp"/>
</dbReference>
<dbReference type="PANTHER" id="PTHR17554">
    <property type="entry name" value="TYRO PROTEIN TYROSINE KINASE-BINDING PROTEIN"/>
    <property type="match status" value="1"/>
</dbReference>
<dbReference type="PANTHER" id="PTHR17554:SF2">
    <property type="entry name" value="TYRO PROTEIN TYROSINE KINASE-BINDING PROTEIN"/>
    <property type="match status" value="1"/>
</dbReference>
<reference key="1">
    <citation type="submission" date="2006-03" db="EMBL/GenBank/DDBJ databases">
        <title>Phylogenetic analysis of NK cell receptors in primates.</title>
        <authorList>
            <person name="Ugolotti E."/>
            <person name="De Maria A."/>
            <person name="Biassoni R."/>
        </authorList>
    </citation>
    <scope>NUCLEOTIDE SEQUENCE [MRNA]</scope>
    <source>
        <tissue>Lymphoid tissue</tissue>
    </source>
</reference>